<feature type="chain" id="PRO_0000356460" description="Large ribosomal subunit protein bL33">
    <location>
        <begin position="1"/>
        <end position="49"/>
    </location>
</feature>
<dbReference type="EMBL" id="AP008971">
    <property type="protein sequence ID" value="BAG07954.1"/>
    <property type="molecule type" value="Genomic_DNA"/>
</dbReference>
<dbReference type="RefSeq" id="WP_002835319.1">
    <property type="nucleotide sequence ID" value="NC_010376.1"/>
</dbReference>
<dbReference type="SMR" id="B0S054"/>
<dbReference type="STRING" id="334413.FMG_0536"/>
<dbReference type="GeneID" id="60839907"/>
<dbReference type="KEGG" id="fma:FMG_0536"/>
<dbReference type="eggNOG" id="COG0267">
    <property type="taxonomic scope" value="Bacteria"/>
</dbReference>
<dbReference type="HOGENOM" id="CLU_190949_0_2_9"/>
<dbReference type="Proteomes" id="UP000001319">
    <property type="component" value="Chromosome"/>
</dbReference>
<dbReference type="GO" id="GO:0005737">
    <property type="term" value="C:cytoplasm"/>
    <property type="evidence" value="ECO:0007669"/>
    <property type="project" value="UniProtKB-ARBA"/>
</dbReference>
<dbReference type="GO" id="GO:1990904">
    <property type="term" value="C:ribonucleoprotein complex"/>
    <property type="evidence" value="ECO:0007669"/>
    <property type="project" value="UniProtKB-KW"/>
</dbReference>
<dbReference type="GO" id="GO:0005840">
    <property type="term" value="C:ribosome"/>
    <property type="evidence" value="ECO:0007669"/>
    <property type="project" value="UniProtKB-KW"/>
</dbReference>
<dbReference type="GO" id="GO:0003735">
    <property type="term" value="F:structural constituent of ribosome"/>
    <property type="evidence" value="ECO:0007669"/>
    <property type="project" value="InterPro"/>
</dbReference>
<dbReference type="GO" id="GO:0006412">
    <property type="term" value="P:translation"/>
    <property type="evidence" value="ECO:0007669"/>
    <property type="project" value="UniProtKB-UniRule"/>
</dbReference>
<dbReference type="Gene3D" id="2.20.28.120">
    <property type="entry name" value="Ribosomal protein L33"/>
    <property type="match status" value="1"/>
</dbReference>
<dbReference type="HAMAP" id="MF_00294">
    <property type="entry name" value="Ribosomal_bL33"/>
    <property type="match status" value="1"/>
</dbReference>
<dbReference type="InterPro" id="IPR001705">
    <property type="entry name" value="Ribosomal_bL33"/>
</dbReference>
<dbReference type="InterPro" id="IPR018264">
    <property type="entry name" value="Ribosomal_bL33_CS"/>
</dbReference>
<dbReference type="InterPro" id="IPR038584">
    <property type="entry name" value="Ribosomal_bL33_sf"/>
</dbReference>
<dbReference type="InterPro" id="IPR011332">
    <property type="entry name" value="Ribosomal_zn-bd"/>
</dbReference>
<dbReference type="NCBIfam" id="NF001764">
    <property type="entry name" value="PRK00504.1"/>
    <property type="match status" value="1"/>
</dbReference>
<dbReference type="NCBIfam" id="NF001860">
    <property type="entry name" value="PRK00595.1"/>
    <property type="match status" value="1"/>
</dbReference>
<dbReference type="NCBIfam" id="TIGR01023">
    <property type="entry name" value="rpmG_bact"/>
    <property type="match status" value="1"/>
</dbReference>
<dbReference type="PANTHER" id="PTHR43168">
    <property type="entry name" value="50S RIBOSOMAL PROTEIN L33, CHLOROPLASTIC"/>
    <property type="match status" value="1"/>
</dbReference>
<dbReference type="PANTHER" id="PTHR43168:SF2">
    <property type="entry name" value="LARGE RIBOSOMAL SUBUNIT PROTEIN BL33C"/>
    <property type="match status" value="1"/>
</dbReference>
<dbReference type="Pfam" id="PF00471">
    <property type="entry name" value="Ribosomal_L33"/>
    <property type="match status" value="1"/>
</dbReference>
<dbReference type="SUPFAM" id="SSF57829">
    <property type="entry name" value="Zn-binding ribosomal proteins"/>
    <property type="match status" value="1"/>
</dbReference>
<dbReference type="PROSITE" id="PS00582">
    <property type="entry name" value="RIBOSOMAL_L33"/>
    <property type="match status" value="1"/>
</dbReference>
<keyword id="KW-1185">Reference proteome</keyword>
<keyword id="KW-0687">Ribonucleoprotein</keyword>
<keyword id="KW-0689">Ribosomal protein</keyword>
<name>RL33_FINM2</name>
<gene>
    <name evidence="1" type="primary">rpmG</name>
    <name type="ordered locus">FMG_0536</name>
</gene>
<proteinExistence type="inferred from homology"/>
<organism>
    <name type="scientific">Finegoldia magna (strain ATCC 29328 / DSM 20472 / WAL 2508)</name>
    <name type="common">Peptostreptococcus magnus</name>
    <dbReference type="NCBI Taxonomy" id="334413"/>
    <lineage>
        <taxon>Bacteria</taxon>
        <taxon>Bacillati</taxon>
        <taxon>Bacillota</taxon>
        <taxon>Tissierellia</taxon>
        <taxon>Tissierellales</taxon>
        <taxon>Peptoniphilaceae</taxon>
        <taxon>Finegoldia</taxon>
    </lineage>
</organism>
<accession>B0S054</accession>
<protein>
    <recommendedName>
        <fullName evidence="1">Large ribosomal subunit protein bL33</fullName>
    </recommendedName>
    <alternativeName>
        <fullName evidence="2">50S ribosomal protein L33</fullName>
    </alternativeName>
</protein>
<reference key="1">
    <citation type="journal article" date="2008" name="DNA Res.">
        <title>Complete genome sequence of Finegoldia magna, an anaerobic opportunistic pathogen.</title>
        <authorList>
            <person name="Goto T."/>
            <person name="Yamashita A."/>
            <person name="Hirakawa H."/>
            <person name="Matsutani M."/>
            <person name="Todo K."/>
            <person name="Ohshima K."/>
            <person name="Toh H."/>
            <person name="Miyamoto K."/>
            <person name="Kuhara S."/>
            <person name="Hattori M."/>
            <person name="Shimizu T."/>
            <person name="Akimoto S."/>
        </authorList>
    </citation>
    <scope>NUCLEOTIDE SEQUENCE [LARGE SCALE GENOMIC DNA]</scope>
    <source>
        <strain>ATCC 29328 / DSM 20472 / WAL 2508</strain>
    </source>
</reference>
<comment type="similarity">
    <text evidence="1">Belongs to the bacterial ribosomal protein bL33 family.</text>
</comment>
<sequence length="49" mass="6012">MRDKVILECTECKSRNYTTKKNKKLHPDRVETNKYCKFCKKHTLHKETR</sequence>
<evidence type="ECO:0000255" key="1">
    <source>
        <dbReference type="HAMAP-Rule" id="MF_00294"/>
    </source>
</evidence>
<evidence type="ECO:0000305" key="2"/>